<evidence type="ECO:0000255" key="1">
    <source>
        <dbReference type="HAMAP-Rule" id="MF_00130"/>
    </source>
</evidence>
<reference key="1">
    <citation type="journal article" date="2002" name="Mol. Microbiol.">
        <title>Genome sequence of Streptococcus agalactiae, a pathogen causing invasive neonatal disease.</title>
        <authorList>
            <person name="Glaser P."/>
            <person name="Rusniok C."/>
            <person name="Buchrieser C."/>
            <person name="Chevalier F."/>
            <person name="Frangeul L."/>
            <person name="Msadek T."/>
            <person name="Zouine M."/>
            <person name="Couve E."/>
            <person name="Lalioui L."/>
            <person name="Poyart C."/>
            <person name="Trieu-Cuot P."/>
            <person name="Kunst F."/>
        </authorList>
    </citation>
    <scope>NUCLEOTIDE SEQUENCE [LARGE SCALE GENOMIC DNA]</scope>
    <source>
        <strain>NEM316</strain>
    </source>
</reference>
<organism>
    <name type="scientific">Streptococcus agalactiae serotype III (strain NEM316)</name>
    <dbReference type="NCBI Taxonomy" id="211110"/>
    <lineage>
        <taxon>Bacteria</taxon>
        <taxon>Bacillati</taxon>
        <taxon>Bacillota</taxon>
        <taxon>Bacilli</taxon>
        <taxon>Lactobacillales</taxon>
        <taxon>Streptococcaceae</taxon>
        <taxon>Streptococcus</taxon>
    </lineage>
</organism>
<protein>
    <recommendedName>
        <fullName evidence="1">Holliday junction resolvase RecU</fullName>
        <ecNumber evidence="1">3.1.21.10</ecNumber>
    </recommendedName>
    <alternativeName>
        <fullName evidence="1">Recombination protein U homolog</fullName>
    </alternativeName>
</protein>
<accession>Q8E768</accession>
<dbReference type="EC" id="3.1.21.10" evidence="1"/>
<dbReference type="EMBL" id="AL766844">
    <property type="protein sequence ID" value="CAD45934.1"/>
    <property type="molecule type" value="Genomic_DNA"/>
</dbReference>
<dbReference type="RefSeq" id="WP_000248792.1">
    <property type="nucleotide sequence ID" value="NC_004368.1"/>
</dbReference>
<dbReference type="SMR" id="Q8E768"/>
<dbReference type="GeneID" id="66885272"/>
<dbReference type="KEGG" id="san:gbs0289"/>
<dbReference type="eggNOG" id="COG3331">
    <property type="taxonomic scope" value="Bacteria"/>
</dbReference>
<dbReference type="HOGENOM" id="CLU_096340_0_0_9"/>
<dbReference type="Proteomes" id="UP000000823">
    <property type="component" value="Chromosome"/>
</dbReference>
<dbReference type="GO" id="GO:0005737">
    <property type="term" value="C:cytoplasm"/>
    <property type="evidence" value="ECO:0007669"/>
    <property type="project" value="UniProtKB-SubCell"/>
</dbReference>
<dbReference type="GO" id="GO:0004519">
    <property type="term" value="F:endonuclease activity"/>
    <property type="evidence" value="ECO:0007669"/>
    <property type="project" value="UniProtKB-UniRule"/>
</dbReference>
<dbReference type="GO" id="GO:0000287">
    <property type="term" value="F:magnesium ion binding"/>
    <property type="evidence" value="ECO:0007669"/>
    <property type="project" value="UniProtKB-UniRule"/>
</dbReference>
<dbReference type="GO" id="GO:0003676">
    <property type="term" value="F:nucleic acid binding"/>
    <property type="evidence" value="ECO:0007669"/>
    <property type="project" value="InterPro"/>
</dbReference>
<dbReference type="GO" id="GO:0007059">
    <property type="term" value="P:chromosome segregation"/>
    <property type="evidence" value="ECO:0007669"/>
    <property type="project" value="UniProtKB-UniRule"/>
</dbReference>
<dbReference type="GO" id="GO:0006310">
    <property type="term" value="P:DNA recombination"/>
    <property type="evidence" value="ECO:0007669"/>
    <property type="project" value="UniProtKB-UniRule"/>
</dbReference>
<dbReference type="GO" id="GO:0006281">
    <property type="term" value="P:DNA repair"/>
    <property type="evidence" value="ECO:0007669"/>
    <property type="project" value="UniProtKB-UniRule"/>
</dbReference>
<dbReference type="CDD" id="cd22354">
    <property type="entry name" value="RecU-like"/>
    <property type="match status" value="1"/>
</dbReference>
<dbReference type="Gene3D" id="3.40.1350.10">
    <property type="match status" value="1"/>
</dbReference>
<dbReference type="HAMAP" id="MF_00130">
    <property type="entry name" value="RecU"/>
    <property type="match status" value="1"/>
</dbReference>
<dbReference type="InterPro" id="IPR004612">
    <property type="entry name" value="Resolv_RecU"/>
</dbReference>
<dbReference type="InterPro" id="IPR011335">
    <property type="entry name" value="Restrct_endonuc-II-like"/>
</dbReference>
<dbReference type="InterPro" id="IPR011856">
    <property type="entry name" value="tRNA_endonuc-like_dom_sf"/>
</dbReference>
<dbReference type="NCBIfam" id="NF002580">
    <property type="entry name" value="PRK02234.1-1"/>
    <property type="match status" value="1"/>
</dbReference>
<dbReference type="NCBIfam" id="NF002584">
    <property type="entry name" value="PRK02234.1-5"/>
    <property type="match status" value="1"/>
</dbReference>
<dbReference type="NCBIfam" id="TIGR00648">
    <property type="entry name" value="recU"/>
    <property type="match status" value="1"/>
</dbReference>
<dbReference type="Pfam" id="PF03838">
    <property type="entry name" value="RecU"/>
    <property type="match status" value="1"/>
</dbReference>
<dbReference type="PIRSF" id="PIRSF037785">
    <property type="entry name" value="RecU"/>
    <property type="match status" value="1"/>
</dbReference>
<dbReference type="SUPFAM" id="SSF52980">
    <property type="entry name" value="Restriction endonuclease-like"/>
    <property type="match status" value="1"/>
</dbReference>
<sequence length="199" mass="23102">MVNYPHQLIRKTTVTKSKKKKIDFANRGMSFEAAINATNDYYLSHELAVIHKKPTPVQIVKVDYPKRSRAKIVEAYFRQASTTDYSGVYKGYYIDFEAKETRQKTAMPMKNFHAHQIEHMANVLQQKGICFVLLHFSTLKETYLLPANELISFYQIDKGNKSMPIDYIRKNGFFVKESAFPQVPYLDIIEEKLLGGDYN</sequence>
<proteinExistence type="inferred from homology"/>
<gene>
    <name evidence="1" type="primary">recU</name>
    <name type="ordered locus">gbs0289</name>
</gene>
<name>RECU_STRA3</name>
<comment type="function">
    <text evidence="1">Endonuclease that resolves Holliday junction intermediates in genetic recombination. Cleaves mobile four-strand junctions by introducing symmetrical nicks in paired strands. Promotes annealing of linear ssDNA with homologous dsDNA. Required for DNA repair, homologous recombination and chromosome segregation.</text>
</comment>
<comment type="catalytic activity">
    <reaction evidence="1">
        <text>Endonucleolytic cleavage at a junction such as a reciprocal single-stranded crossover between two homologous DNA duplexes (Holliday junction).</text>
        <dbReference type="EC" id="3.1.21.10"/>
    </reaction>
</comment>
<comment type="cofactor">
    <cofactor evidence="1">
        <name>Mg(2+)</name>
        <dbReference type="ChEBI" id="CHEBI:18420"/>
    </cofactor>
    <text evidence="1">Binds 1 Mg(2+) ion per subunit.</text>
</comment>
<comment type="subcellular location">
    <subcellularLocation>
        <location evidence="1">Cytoplasm</location>
    </subcellularLocation>
</comment>
<comment type="similarity">
    <text evidence="1">Belongs to the RecU family.</text>
</comment>
<keyword id="KW-0963">Cytoplasm</keyword>
<keyword id="KW-0227">DNA damage</keyword>
<keyword id="KW-0233">DNA recombination</keyword>
<keyword id="KW-0234">DNA repair</keyword>
<keyword id="KW-0255">Endonuclease</keyword>
<keyword id="KW-0378">Hydrolase</keyword>
<keyword id="KW-0460">Magnesium</keyword>
<keyword id="KW-0479">Metal-binding</keyword>
<keyword id="KW-0540">Nuclease</keyword>
<feature type="chain" id="PRO_1000016744" description="Holliday junction resolvase RecU">
    <location>
        <begin position="1"/>
        <end position="199"/>
    </location>
</feature>
<feature type="binding site" evidence="1">
    <location>
        <position position="82"/>
    </location>
    <ligand>
        <name>Mg(2+)</name>
        <dbReference type="ChEBI" id="CHEBI:18420"/>
    </ligand>
</feature>
<feature type="binding site" evidence="1">
    <location>
        <position position="84"/>
    </location>
    <ligand>
        <name>Mg(2+)</name>
        <dbReference type="ChEBI" id="CHEBI:18420"/>
    </ligand>
</feature>
<feature type="binding site" evidence="1">
    <location>
        <position position="97"/>
    </location>
    <ligand>
        <name>Mg(2+)</name>
        <dbReference type="ChEBI" id="CHEBI:18420"/>
    </ligand>
</feature>
<feature type="binding site" evidence="1">
    <location>
        <position position="116"/>
    </location>
    <ligand>
        <name>Mg(2+)</name>
        <dbReference type="ChEBI" id="CHEBI:18420"/>
    </ligand>
</feature>
<feature type="site" description="Transition state stabilizer" evidence="1">
    <location>
        <position position="99"/>
    </location>
</feature>